<proteinExistence type="evidence at transcript level"/>
<name>SDF2B_DROME</name>
<organism>
    <name type="scientific">Drosophila melanogaster</name>
    <name type="common">Fruit fly</name>
    <dbReference type="NCBI Taxonomy" id="7227"/>
    <lineage>
        <taxon>Eukaryota</taxon>
        <taxon>Metazoa</taxon>
        <taxon>Ecdysozoa</taxon>
        <taxon>Arthropoda</taxon>
        <taxon>Hexapoda</taxon>
        <taxon>Insecta</taxon>
        <taxon>Pterygota</taxon>
        <taxon>Neoptera</taxon>
        <taxon>Endopterygota</taxon>
        <taxon>Diptera</taxon>
        <taxon>Brachycera</taxon>
        <taxon>Muscomorpha</taxon>
        <taxon>Ephydroidea</taxon>
        <taxon>Drosophilidae</taxon>
        <taxon>Drosophila</taxon>
        <taxon>Sophophora</taxon>
    </lineage>
</organism>
<dbReference type="EMBL" id="AE013599">
    <property type="protein sequence ID" value="AAF58794.2"/>
    <property type="molecule type" value="Genomic_DNA"/>
</dbReference>
<dbReference type="EMBL" id="AY071255">
    <property type="protein sequence ID" value="AAL48877.2"/>
    <property type="status" value="ALT_INIT"/>
    <property type="molecule type" value="mRNA"/>
</dbReference>
<dbReference type="RefSeq" id="NP_001260868.1">
    <property type="nucleotide sequence ID" value="NM_001273939.2"/>
</dbReference>
<dbReference type="RefSeq" id="NP_610586.3">
    <property type="nucleotide sequence ID" value="NM_136742.5"/>
</dbReference>
<dbReference type="SMR" id="A1Z897"/>
<dbReference type="BioGRID" id="61921">
    <property type="interactions" value="1"/>
</dbReference>
<dbReference type="FunCoup" id="A1Z897">
    <property type="interactions" value="1298"/>
</dbReference>
<dbReference type="IntAct" id="A1Z897">
    <property type="interactions" value="1"/>
</dbReference>
<dbReference type="STRING" id="7227.FBpp0303465"/>
<dbReference type="PaxDb" id="7227-FBpp0303465"/>
<dbReference type="DNASU" id="36103"/>
<dbReference type="EnsemblMetazoa" id="FBtr0088314">
    <property type="protein sequence ID" value="FBpp0087405"/>
    <property type="gene ID" value="FBgn0033523"/>
</dbReference>
<dbReference type="EnsemblMetazoa" id="FBtr0330615">
    <property type="protein sequence ID" value="FBpp0303465"/>
    <property type="gene ID" value="FBgn0033523"/>
</dbReference>
<dbReference type="GeneID" id="36103"/>
<dbReference type="KEGG" id="dme:Dmel_CG12895"/>
<dbReference type="UCSC" id="CG12895-RA">
    <property type="organism name" value="d. melanogaster"/>
</dbReference>
<dbReference type="AGR" id="FB:FBgn0033523"/>
<dbReference type="FlyBase" id="FBgn0033523">
    <property type="gene designation" value="CG12895"/>
</dbReference>
<dbReference type="VEuPathDB" id="VectorBase:FBgn0033523"/>
<dbReference type="eggNOG" id="KOG3326">
    <property type="taxonomic scope" value="Eukaryota"/>
</dbReference>
<dbReference type="GeneTree" id="ENSGT00390000001149"/>
<dbReference type="HOGENOM" id="CLU_103054_0_3_1"/>
<dbReference type="InParanoid" id="A1Z897"/>
<dbReference type="OMA" id="DTEIMRM"/>
<dbReference type="OrthoDB" id="284292at2759"/>
<dbReference type="PhylomeDB" id="A1Z897"/>
<dbReference type="BioGRID-ORCS" id="36103">
    <property type="hits" value="0 hits in 1 CRISPR screen"/>
</dbReference>
<dbReference type="GenomeRNAi" id="36103"/>
<dbReference type="PRO" id="PR:A1Z897"/>
<dbReference type="Proteomes" id="UP000000803">
    <property type="component" value="Chromosome 2R"/>
</dbReference>
<dbReference type="Bgee" id="FBgn0033523">
    <property type="expression patterns" value="Expressed in adult enteroendocrine precursor cell in adult midgut (Drosophila) and 140 other cell types or tissues"/>
</dbReference>
<dbReference type="ExpressionAtlas" id="A1Z897">
    <property type="expression patterns" value="baseline and differential"/>
</dbReference>
<dbReference type="GO" id="GO:0005759">
    <property type="term" value="C:mitochondrial matrix"/>
    <property type="evidence" value="ECO:0007669"/>
    <property type="project" value="UniProtKB-SubCell"/>
</dbReference>
<dbReference type="GO" id="GO:0005739">
    <property type="term" value="C:mitochondrion"/>
    <property type="evidence" value="ECO:0000250"/>
    <property type="project" value="UniProtKB"/>
</dbReference>
<dbReference type="GO" id="GO:0006121">
    <property type="term" value="P:mitochondrial electron transport, succinate to ubiquinone"/>
    <property type="evidence" value="ECO:0000250"/>
    <property type="project" value="UniProtKB"/>
</dbReference>
<dbReference type="GO" id="GO:0034553">
    <property type="term" value="P:mitochondrial respiratory chain complex II assembly"/>
    <property type="evidence" value="ECO:0000318"/>
    <property type="project" value="GO_Central"/>
</dbReference>
<dbReference type="GO" id="GO:0018293">
    <property type="term" value="P:protein-FAD linkage"/>
    <property type="evidence" value="ECO:0000250"/>
    <property type="project" value="UniProtKB"/>
</dbReference>
<dbReference type="GO" id="GO:0006099">
    <property type="term" value="P:tricarboxylic acid cycle"/>
    <property type="evidence" value="ECO:0000318"/>
    <property type="project" value="GO_Central"/>
</dbReference>
<dbReference type="FunFam" id="1.10.150.250:FF:000002">
    <property type="entry name" value="Succinate dehydrogenase assembly factor 2, mitochondrial"/>
    <property type="match status" value="1"/>
</dbReference>
<dbReference type="Gene3D" id="1.10.150.250">
    <property type="entry name" value="Flavinator of succinate dehydrogenase"/>
    <property type="match status" value="1"/>
</dbReference>
<dbReference type="HAMAP" id="MF_03057">
    <property type="entry name" value="SDHAF2"/>
    <property type="match status" value="1"/>
</dbReference>
<dbReference type="InterPro" id="IPR005631">
    <property type="entry name" value="SDH"/>
</dbReference>
<dbReference type="InterPro" id="IPR036714">
    <property type="entry name" value="SDH_sf"/>
</dbReference>
<dbReference type="InterPro" id="IPR028882">
    <property type="entry name" value="SDHAF2"/>
</dbReference>
<dbReference type="PANTHER" id="PTHR12469">
    <property type="entry name" value="PROTEIN EMI5 HOMOLOG, MITOCHONDRIAL"/>
    <property type="match status" value="1"/>
</dbReference>
<dbReference type="PANTHER" id="PTHR12469:SF2">
    <property type="entry name" value="SUCCINATE DEHYDROGENASE ASSEMBLY FACTOR 2, MITOCHONDRIAL"/>
    <property type="match status" value="1"/>
</dbReference>
<dbReference type="Pfam" id="PF03937">
    <property type="entry name" value="Sdh5"/>
    <property type="match status" value="1"/>
</dbReference>
<dbReference type="SUPFAM" id="SSF109910">
    <property type="entry name" value="YgfY-like"/>
    <property type="match status" value="1"/>
</dbReference>
<evidence type="ECO:0000255" key="1"/>
<evidence type="ECO:0000255" key="2">
    <source>
        <dbReference type="HAMAP-Rule" id="MF_03057"/>
    </source>
</evidence>
<evidence type="ECO:0000305" key="3"/>
<gene>
    <name type="ORF">CG12895</name>
</gene>
<sequence>MLRQFIVSTVGRRLQLPMMAQSRLASNLDKTEYTTPGEIVDYDDPPHLPVPEYPVRPDEPLETRKQRLLYQSRKRGMLENDLLLSTFVAKHLKDFNAEQTAEYDQLINGVSNDWDIFYWATDTKPTPPQFDTEIMRLLKEHVKNHEKVQRIRQPDL</sequence>
<reference key="1">
    <citation type="journal article" date="2000" name="Science">
        <title>The genome sequence of Drosophila melanogaster.</title>
        <authorList>
            <person name="Adams M.D."/>
            <person name="Celniker S.E."/>
            <person name="Holt R.A."/>
            <person name="Evans C.A."/>
            <person name="Gocayne J.D."/>
            <person name="Amanatides P.G."/>
            <person name="Scherer S.E."/>
            <person name="Li P.W."/>
            <person name="Hoskins R.A."/>
            <person name="Galle R.F."/>
            <person name="George R.A."/>
            <person name="Lewis S.E."/>
            <person name="Richards S."/>
            <person name="Ashburner M."/>
            <person name="Henderson S.N."/>
            <person name="Sutton G.G."/>
            <person name="Wortman J.R."/>
            <person name="Yandell M.D."/>
            <person name="Zhang Q."/>
            <person name="Chen L.X."/>
            <person name="Brandon R.C."/>
            <person name="Rogers Y.-H.C."/>
            <person name="Blazej R.G."/>
            <person name="Champe M."/>
            <person name="Pfeiffer B.D."/>
            <person name="Wan K.H."/>
            <person name="Doyle C."/>
            <person name="Baxter E.G."/>
            <person name="Helt G."/>
            <person name="Nelson C.R."/>
            <person name="Miklos G.L.G."/>
            <person name="Abril J.F."/>
            <person name="Agbayani A."/>
            <person name="An H.-J."/>
            <person name="Andrews-Pfannkoch C."/>
            <person name="Baldwin D."/>
            <person name="Ballew R.M."/>
            <person name="Basu A."/>
            <person name="Baxendale J."/>
            <person name="Bayraktaroglu L."/>
            <person name="Beasley E.M."/>
            <person name="Beeson K.Y."/>
            <person name="Benos P.V."/>
            <person name="Berman B.P."/>
            <person name="Bhandari D."/>
            <person name="Bolshakov S."/>
            <person name="Borkova D."/>
            <person name="Botchan M.R."/>
            <person name="Bouck J."/>
            <person name="Brokstein P."/>
            <person name="Brottier P."/>
            <person name="Burtis K.C."/>
            <person name="Busam D.A."/>
            <person name="Butler H."/>
            <person name="Cadieu E."/>
            <person name="Center A."/>
            <person name="Chandra I."/>
            <person name="Cherry J.M."/>
            <person name="Cawley S."/>
            <person name="Dahlke C."/>
            <person name="Davenport L.B."/>
            <person name="Davies P."/>
            <person name="de Pablos B."/>
            <person name="Delcher A."/>
            <person name="Deng Z."/>
            <person name="Mays A.D."/>
            <person name="Dew I."/>
            <person name="Dietz S.M."/>
            <person name="Dodson K."/>
            <person name="Doup L.E."/>
            <person name="Downes M."/>
            <person name="Dugan-Rocha S."/>
            <person name="Dunkov B.C."/>
            <person name="Dunn P."/>
            <person name="Durbin K.J."/>
            <person name="Evangelista C.C."/>
            <person name="Ferraz C."/>
            <person name="Ferriera S."/>
            <person name="Fleischmann W."/>
            <person name="Fosler C."/>
            <person name="Gabrielian A.E."/>
            <person name="Garg N.S."/>
            <person name="Gelbart W.M."/>
            <person name="Glasser K."/>
            <person name="Glodek A."/>
            <person name="Gong F."/>
            <person name="Gorrell J.H."/>
            <person name="Gu Z."/>
            <person name="Guan P."/>
            <person name="Harris M."/>
            <person name="Harris N.L."/>
            <person name="Harvey D.A."/>
            <person name="Heiman T.J."/>
            <person name="Hernandez J.R."/>
            <person name="Houck J."/>
            <person name="Hostin D."/>
            <person name="Houston K.A."/>
            <person name="Howland T.J."/>
            <person name="Wei M.-H."/>
            <person name="Ibegwam C."/>
            <person name="Jalali M."/>
            <person name="Kalush F."/>
            <person name="Karpen G.H."/>
            <person name="Ke Z."/>
            <person name="Kennison J.A."/>
            <person name="Ketchum K.A."/>
            <person name="Kimmel B.E."/>
            <person name="Kodira C.D."/>
            <person name="Kraft C.L."/>
            <person name="Kravitz S."/>
            <person name="Kulp D."/>
            <person name="Lai Z."/>
            <person name="Lasko P."/>
            <person name="Lei Y."/>
            <person name="Levitsky A.A."/>
            <person name="Li J.H."/>
            <person name="Li Z."/>
            <person name="Liang Y."/>
            <person name="Lin X."/>
            <person name="Liu X."/>
            <person name="Mattei B."/>
            <person name="McIntosh T.C."/>
            <person name="McLeod M.P."/>
            <person name="McPherson D."/>
            <person name="Merkulov G."/>
            <person name="Milshina N.V."/>
            <person name="Mobarry C."/>
            <person name="Morris J."/>
            <person name="Moshrefi A."/>
            <person name="Mount S.M."/>
            <person name="Moy M."/>
            <person name="Murphy B."/>
            <person name="Murphy L."/>
            <person name="Muzny D.M."/>
            <person name="Nelson D.L."/>
            <person name="Nelson D.R."/>
            <person name="Nelson K.A."/>
            <person name="Nixon K."/>
            <person name="Nusskern D.R."/>
            <person name="Pacleb J.M."/>
            <person name="Palazzolo M."/>
            <person name="Pittman G.S."/>
            <person name="Pan S."/>
            <person name="Pollard J."/>
            <person name="Puri V."/>
            <person name="Reese M.G."/>
            <person name="Reinert K."/>
            <person name="Remington K."/>
            <person name="Saunders R.D.C."/>
            <person name="Scheeler F."/>
            <person name="Shen H."/>
            <person name="Shue B.C."/>
            <person name="Siden-Kiamos I."/>
            <person name="Simpson M."/>
            <person name="Skupski M.P."/>
            <person name="Smith T.J."/>
            <person name="Spier E."/>
            <person name="Spradling A.C."/>
            <person name="Stapleton M."/>
            <person name="Strong R."/>
            <person name="Sun E."/>
            <person name="Svirskas R."/>
            <person name="Tector C."/>
            <person name="Turner R."/>
            <person name="Venter E."/>
            <person name="Wang A.H."/>
            <person name="Wang X."/>
            <person name="Wang Z.-Y."/>
            <person name="Wassarman D.A."/>
            <person name="Weinstock G.M."/>
            <person name="Weissenbach J."/>
            <person name="Williams S.M."/>
            <person name="Woodage T."/>
            <person name="Worley K.C."/>
            <person name="Wu D."/>
            <person name="Yang S."/>
            <person name="Yao Q.A."/>
            <person name="Ye J."/>
            <person name="Yeh R.-F."/>
            <person name="Zaveri J.S."/>
            <person name="Zhan M."/>
            <person name="Zhang G."/>
            <person name="Zhao Q."/>
            <person name="Zheng L."/>
            <person name="Zheng X.H."/>
            <person name="Zhong F.N."/>
            <person name="Zhong W."/>
            <person name="Zhou X."/>
            <person name="Zhu S.C."/>
            <person name="Zhu X."/>
            <person name="Smith H.O."/>
            <person name="Gibbs R.A."/>
            <person name="Myers E.W."/>
            <person name="Rubin G.M."/>
            <person name="Venter J.C."/>
        </authorList>
    </citation>
    <scope>NUCLEOTIDE SEQUENCE [LARGE SCALE GENOMIC DNA]</scope>
    <source>
        <strain>Berkeley</strain>
    </source>
</reference>
<reference key="2">
    <citation type="journal article" date="2002" name="Genome Biol.">
        <title>Annotation of the Drosophila melanogaster euchromatic genome: a systematic review.</title>
        <authorList>
            <person name="Misra S."/>
            <person name="Crosby M.A."/>
            <person name="Mungall C.J."/>
            <person name="Matthews B.B."/>
            <person name="Campbell K.S."/>
            <person name="Hradecky P."/>
            <person name="Huang Y."/>
            <person name="Kaminker J.S."/>
            <person name="Millburn G.H."/>
            <person name="Prochnik S.E."/>
            <person name="Smith C.D."/>
            <person name="Tupy J.L."/>
            <person name="Whitfield E.J."/>
            <person name="Bayraktaroglu L."/>
            <person name="Berman B.P."/>
            <person name="Bettencourt B.R."/>
            <person name="Celniker S.E."/>
            <person name="de Grey A.D.N.J."/>
            <person name="Drysdale R.A."/>
            <person name="Harris N.L."/>
            <person name="Richter J."/>
            <person name="Russo S."/>
            <person name="Schroeder A.J."/>
            <person name="Shu S.Q."/>
            <person name="Stapleton M."/>
            <person name="Yamada C."/>
            <person name="Ashburner M."/>
            <person name="Gelbart W.M."/>
            <person name="Rubin G.M."/>
            <person name="Lewis S.E."/>
        </authorList>
    </citation>
    <scope>GENOME REANNOTATION</scope>
    <source>
        <strain>Berkeley</strain>
    </source>
</reference>
<reference key="3">
    <citation type="journal article" date="2002" name="Genome Biol.">
        <title>A Drosophila full-length cDNA resource.</title>
        <authorList>
            <person name="Stapleton M."/>
            <person name="Carlson J.W."/>
            <person name="Brokstein P."/>
            <person name="Yu C."/>
            <person name="Champe M."/>
            <person name="George R.A."/>
            <person name="Guarin H."/>
            <person name="Kronmiller B."/>
            <person name="Pacleb J.M."/>
            <person name="Park S."/>
            <person name="Wan K.H."/>
            <person name="Rubin G.M."/>
            <person name="Celniker S.E."/>
        </authorList>
    </citation>
    <scope>NUCLEOTIDE SEQUENCE [LARGE SCALE MRNA]</scope>
    <source>
        <strain>Berkeley</strain>
        <tissue>Embryo</tissue>
    </source>
</reference>
<accession>A1Z897</accession>
<accession>Q8SYX8</accession>
<keyword id="KW-0143">Chaperone</keyword>
<keyword id="KW-0496">Mitochondrion</keyword>
<keyword id="KW-1185">Reference proteome</keyword>
<keyword id="KW-0809">Transit peptide</keyword>
<feature type="transit peptide" description="Mitochondrion" evidence="1">
    <location>
        <begin position="1"/>
        <end position="24"/>
    </location>
</feature>
<feature type="chain" id="PRO_0000383168" description="Succinate dehydrogenase assembly factor 2-B, mitochondrial">
    <location>
        <begin position="25"/>
        <end position="156"/>
    </location>
</feature>
<feature type="sequence conflict" description="In Ref. 3; AAL48877." evidence="3" ref="3">
    <original>V</original>
    <variation>F</variation>
    <location>
        <position position="50"/>
    </location>
</feature>
<protein>
    <recommendedName>
        <fullName evidence="2">Succinate dehydrogenase assembly factor 2-B, mitochondrial</fullName>
        <shortName evidence="2">SDH assembly factor 2-B</shortName>
        <shortName evidence="2">SDHAF2-B</shortName>
    </recommendedName>
</protein>
<comment type="function">
    <text evidence="2">Plays an essential role in the assembly of succinate dehydrogenase (SDH), an enzyme complex (also referred to as respiratory complex II) that is a component of both the tricarboxylic acid (TCA) cycle and the mitochondrial electron transport chain, and which couples the oxidation of succinate to fumarate with the reduction of ubiquinone (coenzyme Q) to ubiquinol. Required for flavinylation (covalent attachment of FAD) of the flavoprotein subunit of the SDH catalytic dimer.</text>
</comment>
<comment type="subunit">
    <text evidence="2">Interacts with the flavoprotein subunit within the SDH catalytic dimer.</text>
</comment>
<comment type="subcellular location">
    <subcellularLocation>
        <location evidence="2">Mitochondrion matrix</location>
    </subcellularLocation>
</comment>
<comment type="similarity">
    <text evidence="2">Belongs to the SDHAF2 family.</text>
</comment>
<comment type="sequence caution" evidence="3">
    <conflict type="erroneous initiation">
        <sequence resource="EMBL-CDS" id="AAL48877"/>
    </conflict>
</comment>